<gene>
    <name evidence="1" type="primary">sepF</name>
    <name type="ordered locus">Tery_4907</name>
</gene>
<sequence>MNNLLSKFKDFVGLNEPVEYEYDYDEMEGEQYVYPQQQQTPAAVPTQEESRSNRRLRNRASATTATTASTTGINGVVQQESGMGSVMNNVIGMPGALNGMSEVVVLEPRTFEEMPQAIRALRERKSVVLNLTIMDPEQAQRAVDFVAGGTYALDGHQERIGESIFLFTPSCVQVRTQTGLVNEMSQTQPRPRVPNSGSQVWQPEQIQMIQ</sequence>
<accession>Q10V94</accession>
<evidence type="ECO:0000255" key="1">
    <source>
        <dbReference type="HAMAP-Rule" id="MF_01197"/>
    </source>
</evidence>
<evidence type="ECO:0000256" key="2">
    <source>
        <dbReference type="SAM" id="MobiDB-lite"/>
    </source>
</evidence>
<organism>
    <name type="scientific">Trichodesmium erythraeum (strain IMS101)</name>
    <dbReference type="NCBI Taxonomy" id="203124"/>
    <lineage>
        <taxon>Bacteria</taxon>
        <taxon>Bacillati</taxon>
        <taxon>Cyanobacteriota</taxon>
        <taxon>Cyanophyceae</taxon>
        <taxon>Oscillatoriophycideae</taxon>
        <taxon>Oscillatoriales</taxon>
        <taxon>Microcoleaceae</taxon>
        <taxon>Trichodesmium</taxon>
    </lineage>
</organism>
<proteinExistence type="inferred from homology"/>
<keyword id="KW-0131">Cell cycle</keyword>
<keyword id="KW-0132">Cell division</keyword>
<keyword id="KW-0963">Cytoplasm</keyword>
<keyword id="KW-0717">Septation</keyword>
<name>SEPF_TRIEI</name>
<protein>
    <recommendedName>
        <fullName evidence="1">Cell division protein SepF</fullName>
    </recommendedName>
</protein>
<reference key="1">
    <citation type="journal article" date="2015" name="Proc. Natl. Acad. Sci. U.S.A.">
        <title>Trichodesmium genome maintains abundant, widespread noncoding DNA in situ, despite oligotrophic lifestyle.</title>
        <authorList>
            <person name="Walworth N."/>
            <person name="Pfreundt U."/>
            <person name="Nelson W.C."/>
            <person name="Mincer T."/>
            <person name="Heidelberg J.F."/>
            <person name="Fu F."/>
            <person name="Waterbury J.B."/>
            <person name="Glavina del Rio T."/>
            <person name="Goodwin L."/>
            <person name="Kyrpides N.C."/>
            <person name="Land M.L."/>
            <person name="Woyke T."/>
            <person name="Hutchins D.A."/>
            <person name="Hess W.R."/>
            <person name="Webb E.A."/>
        </authorList>
    </citation>
    <scope>NUCLEOTIDE SEQUENCE [LARGE SCALE GENOMIC DNA]</scope>
    <source>
        <strain>IMS101</strain>
    </source>
</reference>
<feature type="chain" id="PRO_0000334135" description="Cell division protein SepF">
    <location>
        <begin position="1"/>
        <end position="210"/>
    </location>
</feature>
<feature type="region of interest" description="Disordered" evidence="2">
    <location>
        <begin position="36"/>
        <end position="69"/>
    </location>
</feature>
<feature type="region of interest" description="Disordered" evidence="2">
    <location>
        <begin position="182"/>
        <end position="210"/>
    </location>
</feature>
<feature type="compositionally biased region" description="Low complexity" evidence="2">
    <location>
        <begin position="36"/>
        <end position="47"/>
    </location>
</feature>
<feature type="compositionally biased region" description="Low complexity" evidence="2">
    <location>
        <begin position="59"/>
        <end position="69"/>
    </location>
</feature>
<comment type="function">
    <text evidence="1">Cell division protein that is part of the divisome complex and is recruited early to the Z-ring. Probably stimulates Z-ring formation, perhaps through the cross-linking of FtsZ protofilaments. Its function overlaps with FtsA.</text>
</comment>
<comment type="subunit">
    <text evidence="1">Homodimer. Interacts with FtsZ.</text>
</comment>
<comment type="subcellular location">
    <subcellularLocation>
        <location evidence="1">Cytoplasm</location>
    </subcellularLocation>
    <text evidence="1">Localizes to the division site, in a FtsZ-dependent manner.</text>
</comment>
<comment type="similarity">
    <text evidence="1">Belongs to the SepF family.</text>
</comment>
<dbReference type="EMBL" id="CP000393">
    <property type="protein sequence ID" value="ABG53830.1"/>
    <property type="molecule type" value="Genomic_DNA"/>
</dbReference>
<dbReference type="RefSeq" id="WP_011614130.1">
    <property type="nucleotide sequence ID" value="NC_008312.1"/>
</dbReference>
<dbReference type="SMR" id="Q10V94"/>
<dbReference type="STRING" id="203124.Tery_4907"/>
<dbReference type="KEGG" id="ter:Tery_4907"/>
<dbReference type="eggNOG" id="COG1799">
    <property type="taxonomic scope" value="Bacteria"/>
</dbReference>
<dbReference type="HOGENOM" id="CLU_078499_1_1_3"/>
<dbReference type="OrthoDB" id="9815206at2"/>
<dbReference type="GO" id="GO:0005737">
    <property type="term" value="C:cytoplasm"/>
    <property type="evidence" value="ECO:0007669"/>
    <property type="project" value="UniProtKB-SubCell"/>
</dbReference>
<dbReference type="GO" id="GO:0000917">
    <property type="term" value="P:division septum assembly"/>
    <property type="evidence" value="ECO:0007669"/>
    <property type="project" value="UniProtKB-KW"/>
</dbReference>
<dbReference type="GO" id="GO:0043093">
    <property type="term" value="P:FtsZ-dependent cytokinesis"/>
    <property type="evidence" value="ECO:0007669"/>
    <property type="project" value="UniProtKB-UniRule"/>
</dbReference>
<dbReference type="Gene3D" id="3.30.110.150">
    <property type="entry name" value="SepF-like protein"/>
    <property type="match status" value="1"/>
</dbReference>
<dbReference type="HAMAP" id="MF_01197">
    <property type="entry name" value="SepF"/>
    <property type="match status" value="1"/>
</dbReference>
<dbReference type="InterPro" id="IPR023052">
    <property type="entry name" value="Cell_div_SepF"/>
</dbReference>
<dbReference type="InterPro" id="IPR007561">
    <property type="entry name" value="Cell_div_SepF/SepF-rel"/>
</dbReference>
<dbReference type="InterPro" id="IPR038594">
    <property type="entry name" value="SepF-like_sf"/>
</dbReference>
<dbReference type="PANTHER" id="PTHR35798">
    <property type="entry name" value="CELL DIVISION PROTEIN SEPF"/>
    <property type="match status" value="1"/>
</dbReference>
<dbReference type="PANTHER" id="PTHR35798:SF1">
    <property type="entry name" value="CELL DIVISION PROTEIN SEPF"/>
    <property type="match status" value="1"/>
</dbReference>
<dbReference type="Pfam" id="PF04472">
    <property type="entry name" value="SepF"/>
    <property type="match status" value="1"/>
</dbReference>